<gene>
    <name type="primary">ompL</name>
    <name type="ordered locus">STM4016</name>
</gene>
<feature type="signal peptide" evidence="1">
    <location>
        <begin position="1"/>
        <end position="20"/>
    </location>
</feature>
<feature type="chain" id="PRO_0000016609" description="Porin OmpL">
    <location>
        <begin position="21"/>
        <end position="230"/>
    </location>
</feature>
<dbReference type="EMBL" id="AF220438">
    <property type="protein sequence ID" value="AAF27928.1"/>
    <property type="molecule type" value="Genomic_DNA"/>
</dbReference>
<dbReference type="EMBL" id="AE006468">
    <property type="protein sequence ID" value="AAL22855.1"/>
    <property type="molecule type" value="Genomic_DNA"/>
</dbReference>
<dbReference type="RefSeq" id="WP_000838828.1">
    <property type="nucleotide sequence ID" value="NC_003197.2"/>
</dbReference>
<dbReference type="SMR" id="Q9L7R3"/>
<dbReference type="STRING" id="99287.STM4016"/>
<dbReference type="PaxDb" id="99287-STM4016"/>
<dbReference type="KEGG" id="stm:STM4016"/>
<dbReference type="PATRIC" id="fig|99287.12.peg.4231"/>
<dbReference type="HOGENOM" id="CLU_103714_0_0_6"/>
<dbReference type="OMA" id="DTHEFAN"/>
<dbReference type="PhylomeDB" id="Q9L7R3"/>
<dbReference type="BioCyc" id="SENT99287:STM4016-MONOMER"/>
<dbReference type="Proteomes" id="UP000001014">
    <property type="component" value="Chromosome"/>
</dbReference>
<dbReference type="GO" id="GO:0009279">
    <property type="term" value="C:cell outer membrane"/>
    <property type="evidence" value="ECO:0000318"/>
    <property type="project" value="GO_Central"/>
</dbReference>
<dbReference type="GO" id="GO:0046930">
    <property type="term" value="C:pore complex"/>
    <property type="evidence" value="ECO:0007669"/>
    <property type="project" value="UniProtKB-KW"/>
</dbReference>
<dbReference type="GO" id="GO:0015288">
    <property type="term" value="F:porin activity"/>
    <property type="evidence" value="ECO:0000318"/>
    <property type="project" value="GO_Central"/>
</dbReference>
<dbReference type="GO" id="GO:0006811">
    <property type="term" value="P:monoatomic ion transport"/>
    <property type="evidence" value="ECO:0007669"/>
    <property type="project" value="UniProtKB-KW"/>
</dbReference>
<dbReference type="GO" id="GO:0015772">
    <property type="term" value="P:oligosaccharide transport"/>
    <property type="evidence" value="ECO:0000318"/>
    <property type="project" value="GO_Central"/>
</dbReference>
<dbReference type="FunFam" id="2.40.160.40:FF:000001">
    <property type="entry name" value="Porin OmpL"/>
    <property type="match status" value="1"/>
</dbReference>
<dbReference type="Gene3D" id="2.40.160.40">
    <property type="entry name" value="monomeric porin ompg"/>
    <property type="match status" value="1"/>
</dbReference>
<dbReference type="InterPro" id="IPR053713">
    <property type="entry name" value="Bact_OM_Channel_sf"/>
</dbReference>
<dbReference type="InterPro" id="IPR009331">
    <property type="entry name" value="Oligogalacturonate-sp_porin"/>
</dbReference>
<dbReference type="NCBIfam" id="NF007434">
    <property type="entry name" value="PRK09980.1"/>
    <property type="match status" value="1"/>
</dbReference>
<dbReference type="PANTHER" id="PTHR38105:SF2">
    <property type="entry name" value="N-ACETYLNEURAMINIC ACID OUTER MEMBRANE CHANNEL PROTEIN NANC-RELATED"/>
    <property type="match status" value="1"/>
</dbReference>
<dbReference type="PANTHER" id="PTHR38105">
    <property type="entry name" value="OUTER MEMBRANE PROTEIN-RELATED-RELATED"/>
    <property type="match status" value="1"/>
</dbReference>
<dbReference type="Pfam" id="PF06178">
    <property type="entry name" value="KdgM"/>
    <property type="match status" value="1"/>
</dbReference>
<dbReference type="SUPFAM" id="SSF56935">
    <property type="entry name" value="Porins"/>
    <property type="match status" value="1"/>
</dbReference>
<comment type="function">
    <text evidence="1">Outer membrane channel protein that allows an efficient diffusion of low-molecular-weight solutes such as small sugars and tetraglycine. However, the specific substrate recognized by the OmpL channel is unknown (By similarity).</text>
</comment>
<comment type="subcellular location">
    <subcellularLocation>
        <location evidence="1">Cell outer membrane</location>
        <topology evidence="1">Multi-pass membrane protein</topology>
    </subcellularLocation>
</comment>
<comment type="similarity">
    <text evidence="2">Belongs to the oligogalacturonate-specific porin KdgM (TC 1.B.35) family. OmpL subfamily.</text>
</comment>
<evidence type="ECO:0000250" key="1"/>
<evidence type="ECO:0000305" key="2"/>
<organism>
    <name type="scientific">Salmonella typhimurium (strain LT2 / SGSC1412 / ATCC 700720)</name>
    <dbReference type="NCBI Taxonomy" id="99287"/>
    <lineage>
        <taxon>Bacteria</taxon>
        <taxon>Pseudomonadati</taxon>
        <taxon>Pseudomonadota</taxon>
        <taxon>Gammaproteobacteria</taxon>
        <taxon>Enterobacterales</taxon>
        <taxon>Enterobacteriaceae</taxon>
        <taxon>Salmonella</taxon>
    </lineage>
</organism>
<sequence length="230" mass="27105">MKSLNTLVILTSVISTSVFAGAYVENREAYNLASDQMEFMLRVGYNSDMGAGIMLTNTYTLQRDDELKHGYNEIEGWYPLFKPTDKLTIQPGGLINDKSIGSGGAVYLDVNYKFTPWFNLTVRNRYNHNNYSSTDLNGELDNNDSYEIGNYWNFIITDKFSYTFEPHYFYNVNDFNSSNGTKHHWEITNTFRYRINEHWLPYFELRWLDRNVGPYHREQNQIRIGAKYFF</sequence>
<proteinExistence type="inferred from homology"/>
<keyword id="KW-0998">Cell outer membrane</keyword>
<keyword id="KW-0406">Ion transport</keyword>
<keyword id="KW-0472">Membrane</keyword>
<keyword id="KW-0626">Porin</keyword>
<keyword id="KW-1185">Reference proteome</keyword>
<keyword id="KW-0732">Signal</keyword>
<keyword id="KW-0762">Sugar transport</keyword>
<keyword id="KW-0812">Transmembrane</keyword>
<keyword id="KW-1134">Transmembrane beta strand</keyword>
<keyword id="KW-0813">Transport</keyword>
<reference key="1">
    <citation type="submission" date="2000-01" db="EMBL/GenBank/DDBJ databases">
        <title>Utilization of dihydroorotate as sole pyrimidine source by Salmonella typhimurium.</title>
        <authorList>
            <person name="Krogan N.J."/>
            <person name="Zhang R."/>
            <person name="Neuhard J."/>
            <person name="Kelln R.A."/>
        </authorList>
    </citation>
    <scope>NUCLEOTIDE SEQUENCE [GENOMIC DNA]</scope>
    <source>
        <strain>LT2</strain>
    </source>
</reference>
<reference key="2">
    <citation type="journal article" date="2001" name="Nature">
        <title>Complete genome sequence of Salmonella enterica serovar Typhimurium LT2.</title>
        <authorList>
            <person name="McClelland M."/>
            <person name="Sanderson K.E."/>
            <person name="Spieth J."/>
            <person name="Clifton S.W."/>
            <person name="Latreille P."/>
            <person name="Courtney L."/>
            <person name="Porwollik S."/>
            <person name="Ali J."/>
            <person name="Dante M."/>
            <person name="Du F."/>
            <person name="Hou S."/>
            <person name="Layman D."/>
            <person name="Leonard S."/>
            <person name="Nguyen C."/>
            <person name="Scott K."/>
            <person name="Holmes A."/>
            <person name="Grewal N."/>
            <person name="Mulvaney E."/>
            <person name="Ryan E."/>
            <person name="Sun H."/>
            <person name="Florea L."/>
            <person name="Miller W."/>
            <person name="Stoneking T."/>
            <person name="Nhan M."/>
            <person name="Waterston R."/>
            <person name="Wilson R.K."/>
        </authorList>
    </citation>
    <scope>NUCLEOTIDE SEQUENCE [LARGE SCALE GENOMIC DNA]</scope>
    <source>
        <strain>LT2 / SGSC1412 / ATCC 700720</strain>
    </source>
</reference>
<name>OMPL_SALTY</name>
<protein>
    <recommendedName>
        <fullName>Porin OmpL</fullName>
    </recommendedName>
</protein>
<accession>Q9L7R3</accession>